<accession>Q3IJI7</accession>
<protein>
    <recommendedName>
        <fullName evidence="1">Large ribosomal subunit protein bL17</fullName>
    </recommendedName>
    <alternativeName>
        <fullName evidence="2">50S ribosomal protein L17</fullName>
    </alternativeName>
</protein>
<proteinExistence type="inferred from homology"/>
<gene>
    <name evidence="1" type="primary">rplQ</name>
    <name type="ordered locus">PSHAa2805</name>
</gene>
<evidence type="ECO:0000255" key="1">
    <source>
        <dbReference type="HAMAP-Rule" id="MF_01368"/>
    </source>
</evidence>
<evidence type="ECO:0000305" key="2"/>
<reference key="1">
    <citation type="journal article" date="2005" name="Genome Res.">
        <title>Coping with cold: the genome of the versatile marine Antarctica bacterium Pseudoalteromonas haloplanktis TAC125.</title>
        <authorList>
            <person name="Medigue C."/>
            <person name="Krin E."/>
            <person name="Pascal G."/>
            <person name="Barbe V."/>
            <person name="Bernsel A."/>
            <person name="Bertin P.N."/>
            <person name="Cheung F."/>
            <person name="Cruveiller S."/>
            <person name="D'Amico S."/>
            <person name="Duilio A."/>
            <person name="Fang G."/>
            <person name="Feller G."/>
            <person name="Ho C."/>
            <person name="Mangenot S."/>
            <person name="Marino G."/>
            <person name="Nilsson J."/>
            <person name="Parrilli E."/>
            <person name="Rocha E.P.C."/>
            <person name="Rouy Z."/>
            <person name="Sekowska A."/>
            <person name="Tutino M.L."/>
            <person name="Vallenet D."/>
            <person name="von Heijne G."/>
            <person name="Danchin A."/>
        </authorList>
    </citation>
    <scope>NUCLEOTIDE SEQUENCE [LARGE SCALE GENOMIC DNA]</scope>
    <source>
        <strain>TAC 125</strain>
    </source>
</reference>
<comment type="subunit">
    <text evidence="1">Part of the 50S ribosomal subunit. Contacts protein L32.</text>
</comment>
<comment type="similarity">
    <text evidence="1">Belongs to the bacterial ribosomal protein bL17 family.</text>
</comment>
<name>RL17_PSET1</name>
<dbReference type="EMBL" id="CR954246">
    <property type="protein sequence ID" value="CAI87842.1"/>
    <property type="molecule type" value="Genomic_DNA"/>
</dbReference>
<dbReference type="SMR" id="Q3IJI7"/>
<dbReference type="STRING" id="326442.PSHAa2805"/>
<dbReference type="KEGG" id="pha:PSHAa2805"/>
<dbReference type="eggNOG" id="COG0203">
    <property type="taxonomic scope" value="Bacteria"/>
</dbReference>
<dbReference type="HOGENOM" id="CLU_074407_2_0_6"/>
<dbReference type="BioCyc" id="PHAL326442:PSHA_RS13765-MONOMER"/>
<dbReference type="Proteomes" id="UP000006843">
    <property type="component" value="Chromosome I"/>
</dbReference>
<dbReference type="GO" id="GO:0022625">
    <property type="term" value="C:cytosolic large ribosomal subunit"/>
    <property type="evidence" value="ECO:0007669"/>
    <property type="project" value="TreeGrafter"/>
</dbReference>
<dbReference type="GO" id="GO:0003735">
    <property type="term" value="F:structural constituent of ribosome"/>
    <property type="evidence" value="ECO:0007669"/>
    <property type="project" value="InterPro"/>
</dbReference>
<dbReference type="GO" id="GO:0006412">
    <property type="term" value="P:translation"/>
    <property type="evidence" value="ECO:0007669"/>
    <property type="project" value="UniProtKB-UniRule"/>
</dbReference>
<dbReference type="FunFam" id="3.90.1030.10:FF:000001">
    <property type="entry name" value="50S ribosomal protein L17"/>
    <property type="match status" value="1"/>
</dbReference>
<dbReference type="Gene3D" id="3.90.1030.10">
    <property type="entry name" value="Ribosomal protein L17"/>
    <property type="match status" value="1"/>
</dbReference>
<dbReference type="HAMAP" id="MF_01368">
    <property type="entry name" value="Ribosomal_bL17"/>
    <property type="match status" value="1"/>
</dbReference>
<dbReference type="InterPro" id="IPR000456">
    <property type="entry name" value="Ribosomal_bL17"/>
</dbReference>
<dbReference type="InterPro" id="IPR047859">
    <property type="entry name" value="Ribosomal_bL17_CS"/>
</dbReference>
<dbReference type="InterPro" id="IPR036373">
    <property type="entry name" value="Ribosomal_bL17_sf"/>
</dbReference>
<dbReference type="NCBIfam" id="TIGR00059">
    <property type="entry name" value="L17"/>
    <property type="match status" value="1"/>
</dbReference>
<dbReference type="PANTHER" id="PTHR14413:SF16">
    <property type="entry name" value="LARGE RIBOSOMAL SUBUNIT PROTEIN BL17M"/>
    <property type="match status" value="1"/>
</dbReference>
<dbReference type="PANTHER" id="PTHR14413">
    <property type="entry name" value="RIBOSOMAL PROTEIN L17"/>
    <property type="match status" value="1"/>
</dbReference>
<dbReference type="Pfam" id="PF01196">
    <property type="entry name" value="Ribosomal_L17"/>
    <property type="match status" value="1"/>
</dbReference>
<dbReference type="SUPFAM" id="SSF64263">
    <property type="entry name" value="Prokaryotic ribosomal protein L17"/>
    <property type="match status" value="1"/>
</dbReference>
<dbReference type="PROSITE" id="PS01167">
    <property type="entry name" value="RIBOSOMAL_L17"/>
    <property type="match status" value="1"/>
</dbReference>
<feature type="chain" id="PRO_1000055918" description="Large ribosomal subunit protein bL17">
    <location>
        <begin position="1"/>
        <end position="133"/>
    </location>
</feature>
<sequence length="133" mass="14847">MRHRKSGRQLNRNSSHRKAMFSNMAGSLVKHEIIKTTLPKAKELRRVIEPLITLAKTDSVANRRLAFARTRDNEVVGKLFSEIGPRNADRPGGYTRILKCGFRTGDNAPMAYIELVGRPATSEAVQEDAQSAE</sequence>
<organism>
    <name type="scientific">Pseudoalteromonas translucida (strain TAC 125)</name>
    <dbReference type="NCBI Taxonomy" id="326442"/>
    <lineage>
        <taxon>Bacteria</taxon>
        <taxon>Pseudomonadati</taxon>
        <taxon>Pseudomonadota</taxon>
        <taxon>Gammaproteobacteria</taxon>
        <taxon>Alteromonadales</taxon>
        <taxon>Pseudoalteromonadaceae</taxon>
        <taxon>Pseudoalteromonas</taxon>
    </lineage>
</organism>
<keyword id="KW-1185">Reference proteome</keyword>
<keyword id="KW-0687">Ribonucleoprotein</keyword>
<keyword id="KW-0689">Ribosomal protein</keyword>